<dbReference type="EC" id="2.7.1.33" evidence="1"/>
<dbReference type="EMBL" id="CP000260">
    <property type="protein sequence ID" value="ABF34124.1"/>
    <property type="molecule type" value="Genomic_DNA"/>
</dbReference>
<dbReference type="RefSeq" id="WP_010922353.1">
    <property type="nucleotide sequence ID" value="NZ_CVUH01000005.1"/>
</dbReference>
<dbReference type="SMR" id="Q1JGM0"/>
<dbReference type="GeneID" id="69900800"/>
<dbReference type="KEGG" id="sph:MGAS10270_Spy1059"/>
<dbReference type="HOGENOM" id="CLU_053818_1_1_9"/>
<dbReference type="UniPathway" id="UPA00241">
    <property type="reaction ID" value="UER00352"/>
</dbReference>
<dbReference type="Proteomes" id="UP000002436">
    <property type="component" value="Chromosome"/>
</dbReference>
<dbReference type="GO" id="GO:0005737">
    <property type="term" value="C:cytoplasm"/>
    <property type="evidence" value="ECO:0007669"/>
    <property type="project" value="UniProtKB-SubCell"/>
</dbReference>
<dbReference type="GO" id="GO:0005524">
    <property type="term" value="F:ATP binding"/>
    <property type="evidence" value="ECO:0007669"/>
    <property type="project" value="UniProtKB-UniRule"/>
</dbReference>
<dbReference type="GO" id="GO:0004594">
    <property type="term" value="F:pantothenate kinase activity"/>
    <property type="evidence" value="ECO:0007669"/>
    <property type="project" value="UniProtKB-UniRule"/>
</dbReference>
<dbReference type="GO" id="GO:0015937">
    <property type="term" value="P:coenzyme A biosynthetic process"/>
    <property type="evidence" value="ECO:0007669"/>
    <property type="project" value="UniProtKB-UniRule"/>
</dbReference>
<dbReference type="CDD" id="cd02025">
    <property type="entry name" value="PanK"/>
    <property type="match status" value="1"/>
</dbReference>
<dbReference type="Gene3D" id="3.40.50.300">
    <property type="entry name" value="P-loop containing nucleotide triphosphate hydrolases"/>
    <property type="match status" value="1"/>
</dbReference>
<dbReference type="HAMAP" id="MF_00215">
    <property type="entry name" value="Pantothen_kinase_1"/>
    <property type="match status" value="1"/>
</dbReference>
<dbReference type="InterPro" id="IPR027417">
    <property type="entry name" value="P-loop_NTPase"/>
</dbReference>
<dbReference type="InterPro" id="IPR004566">
    <property type="entry name" value="PanK"/>
</dbReference>
<dbReference type="InterPro" id="IPR006083">
    <property type="entry name" value="PRK/URK"/>
</dbReference>
<dbReference type="NCBIfam" id="TIGR00554">
    <property type="entry name" value="panK_bact"/>
    <property type="match status" value="1"/>
</dbReference>
<dbReference type="PANTHER" id="PTHR10285">
    <property type="entry name" value="URIDINE KINASE"/>
    <property type="match status" value="1"/>
</dbReference>
<dbReference type="Pfam" id="PF00485">
    <property type="entry name" value="PRK"/>
    <property type="match status" value="1"/>
</dbReference>
<dbReference type="PIRSF" id="PIRSF000545">
    <property type="entry name" value="Pantothenate_kin"/>
    <property type="match status" value="1"/>
</dbReference>
<dbReference type="SUPFAM" id="SSF52540">
    <property type="entry name" value="P-loop containing nucleoside triphosphate hydrolases"/>
    <property type="match status" value="1"/>
</dbReference>
<accession>Q1JGM0</accession>
<proteinExistence type="inferred from homology"/>
<name>COAA_STRPD</name>
<keyword id="KW-0067">ATP-binding</keyword>
<keyword id="KW-0173">Coenzyme A biosynthesis</keyword>
<keyword id="KW-0963">Cytoplasm</keyword>
<keyword id="KW-0418">Kinase</keyword>
<keyword id="KW-0547">Nucleotide-binding</keyword>
<keyword id="KW-0808">Transferase</keyword>
<gene>
    <name evidence="1" type="primary">coaA</name>
    <name type="ordered locus">MGAS10270_Spy1059</name>
</gene>
<protein>
    <recommendedName>
        <fullName evidence="1">Pantothenate kinase</fullName>
        <ecNumber evidence="1">2.7.1.33</ecNumber>
    </recommendedName>
    <alternativeName>
        <fullName evidence="1">Pantothenic acid kinase</fullName>
    </alternativeName>
</protein>
<evidence type="ECO:0000255" key="1">
    <source>
        <dbReference type="HAMAP-Rule" id="MF_00215"/>
    </source>
</evidence>
<comment type="catalytic activity">
    <reaction evidence="1">
        <text>(R)-pantothenate + ATP = (R)-4'-phosphopantothenate + ADP + H(+)</text>
        <dbReference type="Rhea" id="RHEA:16373"/>
        <dbReference type="ChEBI" id="CHEBI:10986"/>
        <dbReference type="ChEBI" id="CHEBI:15378"/>
        <dbReference type="ChEBI" id="CHEBI:29032"/>
        <dbReference type="ChEBI" id="CHEBI:30616"/>
        <dbReference type="ChEBI" id="CHEBI:456216"/>
        <dbReference type="EC" id="2.7.1.33"/>
    </reaction>
</comment>
<comment type="pathway">
    <text evidence="1">Cofactor biosynthesis; coenzyme A biosynthesis; CoA from (R)-pantothenate: step 1/5.</text>
</comment>
<comment type="subcellular location">
    <subcellularLocation>
        <location evidence="1">Cytoplasm</location>
    </subcellularLocation>
</comment>
<comment type="similarity">
    <text evidence="1">Belongs to the prokaryotic pantothenate kinase family.</text>
</comment>
<feature type="chain" id="PRO_1000043264" description="Pantothenate kinase">
    <location>
        <begin position="1"/>
        <end position="306"/>
    </location>
</feature>
<feature type="binding site" evidence="1">
    <location>
        <begin position="91"/>
        <end position="98"/>
    </location>
    <ligand>
        <name>ATP</name>
        <dbReference type="ChEBI" id="CHEBI:30616"/>
    </ligand>
</feature>
<sequence>MSNEFINFEKISRESWKTLHQKAKALLTQEELKSITSLNDNISINDVIDIYLPLINLIQVYKIAQENLSFSKSLFLKKDIQLRPFIIGISGSVAVGKSTTSRLLQLLLSRTHPNSQVELVTTDGFLYPNQFLIEQGLLNRKGFPESYNMELLLDFLDSIKNGQTAFAPVYSHDIYDIIPNQKQSFNNPDFLIVEGINVFQNQQNNRLYMSDYFDFSIYIDADSSHIETWYIERFLSILKLAKRDPHNYYAQYAQLPRSEAIAFARNVWKTVNLENLEKFIEPTRNRAELILHKSADHKIDEIYLKK</sequence>
<organism>
    <name type="scientific">Streptococcus pyogenes serotype M2 (strain MGAS10270)</name>
    <dbReference type="NCBI Taxonomy" id="370552"/>
    <lineage>
        <taxon>Bacteria</taxon>
        <taxon>Bacillati</taxon>
        <taxon>Bacillota</taxon>
        <taxon>Bacilli</taxon>
        <taxon>Lactobacillales</taxon>
        <taxon>Streptococcaceae</taxon>
        <taxon>Streptococcus</taxon>
    </lineage>
</organism>
<reference key="1">
    <citation type="journal article" date="2006" name="Proc. Natl. Acad. Sci. U.S.A.">
        <title>Molecular genetic anatomy of inter- and intraserotype variation in the human bacterial pathogen group A Streptococcus.</title>
        <authorList>
            <person name="Beres S.B."/>
            <person name="Richter E.W."/>
            <person name="Nagiec M.J."/>
            <person name="Sumby P."/>
            <person name="Porcella S.F."/>
            <person name="DeLeo F.R."/>
            <person name="Musser J.M."/>
        </authorList>
    </citation>
    <scope>NUCLEOTIDE SEQUENCE [LARGE SCALE GENOMIC DNA]</scope>
    <source>
        <strain>MGAS10270</strain>
    </source>
</reference>